<reference key="1">
    <citation type="journal article" date="2002" name="Brain Res. Dev. Brain Res.">
        <title>Mosaic development of the olfactory cortex with Pax6-dependent and -independent components.</title>
        <authorList>
            <person name="Hirata T."/>
            <person name="Nomura T."/>
            <person name="Takagi Y."/>
            <person name="Sato Y."/>
            <person name="Tomioka N."/>
            <person name="Fujisawa H."/>
            <person name="Osumi N."/>
        </authorList>
    </citation>
    <scope>NUCLEOTIDE SEQUENCE [MRNA]</scope>
    <scope>DEVELOPMENTAL STAGE</scope>
    <scope>SUBCELLULAR LOCATION</scope>
    <source>
        <strain>ICR</strain>
        <tissue>Brain</tissue>
    </source>
</reference>
<reference key="2">
    <citation type="journal article" date="2009" name="PLoS Biol.">
        <title>Lineage-specific biology revealed by a finished genome assembly of the mouse.</title>
        <authorList>
            <person name="Church D.M."/>
            <person name="Goodstadt L."/>
            <person name="Hillier L.W."/>
            <person name="Zody M.C."/>
            <person name="Goldstein S."/>
            <person name="She X."/>
            <person name="Bult C.J."/>
            <person name="Agarwala R."/>
            <person name="Cherry J.L."/>
            <person name="DiCuccio M."/>
            <person name="Hlavina W."/>
            <person name="Kapustin Y."/>
            <person name="Meric P."/>
            <person name="Maglott D."/>
            <person name="Birtle Z."/>
            <person name="Marques A.C."/>
            <person name="Graves T."/>
            <person name="Zhou S."/>
            <person name="Teague B."/>
            <person name="Potamousis K."/>
            <person name="Churas C."/>
            <person name="Place M."/>
            <person name="Herschleb J."/>
            <person name="Runnheim R."/>
            <person name="Forrest D."/>
            <person name="Amos-Landgraf J."/>
            <person name="Schwartz D.C."/>
            <person name="Cheng Z."/>
            <person name="Lindblad-Toh K."/>
            <person name="Eichler E.E."/>
            <person name="Ponting C.P."/>
        </authorList>
    </citation>
    <scope>NUCLEOTIDE SEQUENCE [LARGE SCALE GENOMIC DNA]</scope>
    <source>
        <strain>C57BL/6J</strain>
    </source>
</reference>
<reference key="3">
    <citation type="journal article" date="2004" name="Genome Res.">
        <title>The status, quality, and expansion of the NIH full-length cDNA project: the Mammalian Gene Collection (MGC).</title>
        <authorList>
            <consortium name="The MGC Project Team"/>
        </authorList>
    </citation>
    <scope>NUCLEOTIDE SEQUENCE [LARGE SCALE MRNA]</scope>
    <source>
        <tissue>Eye</tissue>
        <tissue>Olfactory epithelium</tissue>
    </source>
</reference>
<reference key="4">
    <citation type="submission" date="2007-04" db="UniProtKB">
        <authorList>
            <person name="Lubec G."/>
            <person name="Kang S.U."/>
        </authorList>
    </citation>
    <scope>PROTEIN SEQUENCE OF 181-190; 238-248; 647-654 AND 759-767</scope>
    <scope>IDENTIFICATION BY MASS SPECTROMETRY</scope>
    <source>
        <strain>C57BL/6J</strain>
        <tissue>Brain</tissue>
    </source>
</reference>
<reference key="5">
    <citation type="journal article" date="2003" name="FASEB J.">
        <title>A reticular rhapsody: phylogenic evolution and nomenclature of the RTN/Nogo gene family.</title>
        <authorList>
            <person name="Oertle T."/>
            <person name="Klinger M."/>
            <person name="Stuermer C.A.O."/>
            <person name="Schwab M.E."/>
        </authorList>
    </citation>
    <scope>IDENTIFICATION</scope>
</reference>
<reference key="6">
    <citation type="journal article" date="2010" name="Cell">
        <title>A tissue-specific atlas of mouse protein phosphorylation and expression.</title>
        <authorList>
            <person name="Huttlin E.L."/>
            <person name="Jedrychowski M.P."/>
            <person name="Elias J.E."/>
            <person name="Goswami T."/>
            <person name="Rad R."/>
            <person name="Beausoleil S.A."/>
            <person name="Villen J."/>
            <person name="Haas W."/>
            <person name="Sowa M.E."/>
            <person name="Gygi S.P."/>
        </authorList>
    </citation>
    <scope>PHOSPHORYLATION [LARGE SCALE ANALYSIS] AT SER-350; SER-352 AND SER-487</scope>
    <scope>IDENTIFICATION BY MASS SPECTROMETRY [LARGE SCALE ANALYSIS]</scope>
    <source>
        <tissue>Brain</tissue>
        <tissue>Heart</tissue>
        <tissue>Lung</tissue>
        <tissue>Spleen</tissue>
        <tissue>Testis</tissue>
    </source>
</reference>
<dbReference type="EMBL" id="AB074899">
    <property type="protein sequence ID" value="BAB96551.1"/>
    <property type="molecule type" value="mRNA"/>
</dbReference>
<dbReference type="EMBL" id="BC030455">
    <property type="protein sequence ID" value="AAH30455.1"/>
    <property type="molecule type" value="mRNA"/>
</dbReference>
<dbReference type="EMBL" id="BC053926">
    <property type="protein sequence ID" value="AAH53926.1"/>
    <property type="molecule type" value="mRNA"/>
</dbReference>
<dbReference type="EMBL" id="BC058579">
    <property type="protein sequence ID" value="AAH58579.1"/>
    <property type="molecule type" value="mRNA"/>
</dbReference>
<dbReference type="EMBL" id="BK001694">
    <property type="protein sequence ID" value="DAA01939.1"/>
    <property type="molecule type" value="mRNA"/>
</dbReference>
<dbReference type="CCDS" id="CCDS25968.1"/>
<dbReference type="RefSeq" id="NP_001273377.1">
    <property type="nucleotide sequence ID" value="NM_001286448.1"/>
</dbReference>
<dbReference type="RefSeq" id="NP_703187.2">
    <property type="nucleotide sequence ID" value="NM_153457.7"/>
</dbReference>
<dbReference type="SMR" id="Q8K0T0"/>
<dbReference type="BioGRID" id="222271">
    <property type="interactions" value="15"/>
</dbReference>
<dbReference type="CORUM" id="Q8K0T0"/>
<dbReference type="FunCoup" id="Q8K0T0">
    <property type="interactions" value="613"/>
</dbReference>
<dbReference type="IntAct" id="Q8K0T0">
    <property type="interactions" value="3"/>
</dbReference>
<dbReference type="STRING" id="10090.ENSMUSP00000077594"/>
<dbReference type="GlyGen" id="Q8K0T0">
    <property type="glycosylation" value="3 sites, 1 N-linked glycan (1 site), 1 O-linked glycan (2 sites)"/>
</dbReference>
<dbReference type="iPTMnet" id="Q8K0T0"/>
<dbReference type="PhosphoSitePlus" id="Q8K0T0"/>
<dbReference type="SwissPalm" id="Q8K0T0"/>
<dbReference type="jPOST" id="Q8K0T0"/>
<dbReference type="PaxDb" id="10090-ENSMUSP00000077594"/>
<dbReference type="ProteomicsDB" id="262724"/>
<dbReference type="Pumba" id="Q8K0T0"/>
<dbReference type="Antibodypedia" id="3447">
    <property type="antibodies" value="538 antibodies from 29 providers"/>
</dbReference>
<dbReference type="DNASU" id="104001"/>
<dbReference type="Ensembl" id="ENSMUST00000078505.14">
    <property type="protein sequence ID" value="ENSMUSP00000077594.8"/>
    <property type="gene ID" value="ENSMUSG00000021087.19"/>
</dbReference>
<dbReference type="GeneID" id="104001"/>
<dbReference type="KEGG" id="mmu:104001"/>
<dbReference type="UCSC" id="uc007nvk.2">
    <property type="organism name" value="mouse"/>
</dbReference>
<dbReference type="AGR" id="MGI:1933947"/>
<dbReference type="CTD" id="6252"/>
<dbReference type="MGI" id="MGI:1933947">
    <property type="gene designation" value="Rtn1"/>
</dbReference>
<dbReference type="VEuPathDB" id="HostDB:ENSMUSG00000021087"/>
<dbReference type="eggNOG" id="KOG1792">
    <property type="taxonomic scope" value="Eukaryota"/>
</dbReference>
<dbReference type="GeneTree" id="ENSGT00940000155077"/>
<dbReference type="HOGENOM" id="CLU_018293_0_0_1"/>
<dbReference type="InParanoid" id="Q8K0T0"/>
<dbReference type="OrthoDB" id="567788at2759"/>
<dbReference type="PhylomeDB" id="Q8K0T0"/>
<dbReference type="TreeFam" id="TF105431"/>
<dbReference type="BioGRID-ORCS" id="104001">
    <property type="hits" value="2 hits in 75 CRISPR screens"/>
</dbReference>
<dbReference type="CD-CODE" id="CE726F99">
    <property type="entry name" value="Postsynaptic density"/>
</dbReference>
<dbReference type="ChiTaRS" id="Rtn1">
    <property type="organism name" value="mouse"/>
</dbReference>
<dbReference type="PRO" id="PR:Q8K0T0"/>
<dbReference type="Proteomes" id="UP000000589">
    <property type="component" value="Chromosome 12"/>
</dbReference>
<dbReference type="RNAct" id="Q8K0T0">
    <property type="molecule type" value="protein"/>
</dbReference>
<dbReference type="Bgee" id="ENSMUSG00000021087">
    <property type="expression patterns" value="Expressed in dentate gyrus of hippocampal formation granule cell and 190 other cell types or tissues"/>
</dbReference>
<dbReference type="ExpressionAtlas" id="Q8K0T0">
    <property type="expression patterns" value="baseline and differential"/>
</dbReference>
<dbReference type="GO" id="GO:0030425">
    <property type="term" value="C:dendrite"/>
    <property type="evidence" value="ECO:0000314"/>
    <property type="project" value="MGI"/>
</dbReference>
<dbReference type="GO" id="GO:0005783">
    <property type="term" value="C:endoplasmic reticulum"/>
    <property type="evidence" value="ECO:0000314"/>
    <property type="project" value="MGI"/>
</dbReference>
<dbReference type="GO" id="GO:0005789">
    <property type="term" value="C:endoplasmic reticulum membrane"/>
    <property type="evidence" value="ECO:0007669"/>
    <property type="project" value="UniProtKB-SubCell"/>
</dbReference>
<dbReference type="GO" id="GO:0000139">
    <property type="term" value="C:Golgi membrane"/>
    <property type="evidence" value="ECO:0007669"/>
    <property type="project" value="UniProtKB-SubCell"/>
</dbReference>
<dbReference type="GO" id="GO:0043025">
    <property type="term" value="C:neuronal cell body"/>
    <property type="evidence" value="ECO:0000314"/>
    <property type="project" value="MGI"/>
</dbReference>
<dbReference type="GO" id="GO:0016604">
    <property type="term" value="C:nuclear body"/>
    <property type="evidence" value="ECO:0007669"/>
    <property type="project" value="Ensembl"/>
</dbReference>
<dbReference type="GO" id="GO:0005790">
    <property type="term" value="C:smooth endoplasmic reticulum"/>
    <property type="evidence" value="ECO:0000266"/>
    <property type="project" value="MGI"/>
</dbReference>
<dbReference type="GO" id="GO:1902430">
    <property type="term" value="P:negative regulation of amyloid-beta formation"/>
    <property type="evidence" value="ECO:0000250"/>
    <property type="project" value="UniProtKB"/>
</dbReference>
<dbReference type="FunFam" id="1.20.5.2480:FF:000001">
    <property type="entry name" value="Reticulon"/>
    <property type="match status" value="1"/>
</dbReference>
<dbReference type="Gene3D" id="1.20.5.2480">
    <property type="match status" value="1"/>
</dbReference>
<dbReference type="InterPro" id="IPR003388">
    <property type="entry name" value="Reticulon"/>
</dbReference>
<dbReference type="InterPro" id="IPR046964">
    <property type="entry name" value="RTN1-4"/>
</dbReference>
<dbReference type="PANTHER" id="PTHR45799:SF5">
    <property type="entry name" value="RETICULON-1"/>
    <property type="match status" value="1"/>
</dbReference>
<dbReference type="PANTHER" id="PTHR45799">
    <property type="entry name" value="RETICULON-LIKE PROTEIN"/>
    <property type="match status" value="1"/>
</dbReference>
<dbReference type="Pfam" id="PF02453">
    <property type="entry name" value="Reticulon"/>
    <property type="match status" value="1"/>
</dbReference>
<dbReference type="PROSITE" id="PS50845">
    <property type="entry name" value="RETICULON"/>
    <property type="match status" value="1"/>
</dbReference>
<comment type="function">
    <text evidence="1">Inhibits amyloid precursor protein processing, probably by blocking BACE1 activity.</text>
</comment>
<comment type="subunit">
    <text evidence="1">Interacts with NDRG1. Interacts with BACE1. Interacts with TMEM33.</text>
</comment>
<comment type="subcellular location">
    <subcellularLocation>
        <location evidence="6">Endoplasmic reticulum membrane</location>
        <topology evidence="3">Multi-pass membrane protein</topology>
    </subcellularLocation>
    <subcellularLocation>
        <location evidence="1">Golgi apparatus membrane</location>
        <topology evidence="3">Multi-pass membrane protein</topology>
    </subcellularLocation>
</comment>
<comment type="developmental stage">
    <text evidence="6">At 12.5 dpc-14.5 dpc, strongly expressed in radial glial fibers, which are a scaffold for migrating neurons (at protein level).</text>
</comment>
<keyword id="KW-0903">Direct protein sequencing</keyword>
<keyword id="KW-0256">Endoplasmic reticulum</keyword>
<keyword id="KW-0333">Golgi apparatus</keyword>
<keyword id="KW-0472">Membrane</keyword>
<keyword id="KW-0597">Phosphoprotein</keyword>
<keyword id="KW-1185">Reference proteome</keyword>
<keyword id="KW-0812">Transmembrane</keyword>
<keyword id="KW-1133">Transmembrane helix</keyword>
<protein>
    <recommendedName>
        <fullName>Reticulon-1</fullName>
    </recommendedName>
    <alternativeName>
        <fullName>Neuroendocrine-specific protein</fullName>
    </alternativeName>
</protein>
<feature type="chain" id="PRO_0000168159" description="Reticulon-1">
    <location>
        <begin position="1"/>
        <end position="780"/>
    </location>
</feature>
<feature type="transmembrane region" description="Helical" evidence="3">
    <location>
        <begin position="607"/>
        <end position="627"/>
    </location>
</feature>
<feature type="transmembrane region" description="Helical" evidence="3">
    <location>
        <begin position="709"/>
        <end position="729"/>
    </location>
</feature>
<feature type="domain" description="Reticulon" evidence="4">
    <location>
        <begin position="593"/>
        <end position="780"/>
    </location>
</feature>
<feature type="region of interest" description="Disordered" evidence="5">
    <location>
        <begin position="1"/>
        <end position="76"/>
    </location>
</feature>
<feature type="region of interest" description="Disordered" evidence="5">
    <location>
        <begin position="128"/>
        <end position="176"/>
    </location>
</feature>
<feature type="region of interest" description="Disordered" evidence="5">
    <location>
        <begin position="201"/>
        <end position="223"/>
    </location>
</feature>
<feature type="region of interest" description="Disordered" evidence="5">
    <location>
        <begin position="293"/>
        <end position="576"/>
    </location>
</feature>
<feature type="compositionally biased region" description="Low complexity" evidence="5">
    <location>
        <begin position="328"/>
        <end position="341"/>
    </location>
</feature>
<feature type="compositionally biased region" description="Basic and acidic residues" evidence="5">
    <location>
        <begin position="497"/>
        <end position="512"/>
    </location>
</feature>
<feature type="modified residue" description="Phosphoserine" evidence="2">
    <location>
        <position position="13"/>
    </location>
</feature>
<feature type="modified residue" description="Phosphoserine" evidence="2">
    <location>
        <position position="70"/>
    </location>
</feature>
<feature type="modified residue" description="Phosphoserine" evidence="2">
    <location>
        <position position="327"/>
    </location>
</feature>
<feature type="modified residue" description="Phosphoserine" evidence="8">
    <location>
        <position position="350"/>
    </location>
</feature>
<feature type="modified residue" description="Phosphoserine" evidence="8">
    <location>
        <position position="352"/>
    </location>
</feature>
<feature type="modified residue" description="Phosphoserine" evidence="8">
    <location>
        <position position="487"/>
    </location>
</feature>
<feature type="sequence conflict" description="In Ref. 1; BAB96551." evidence="7" ref="1">
    <original>P</original>
    <variation>S</variation>
    <location>
        <position position="71"/>
    </location>
</feature>
<feature type="sequence conflict" description="In Ref. 1; BAB96551." evidence="7" ref="1">
    <original>D</original>
    <variation>G</variation>
    <location>
        <position position="226"/>
    </location>
</feature>
<proteinExistence type="evidence at protein level"/>
<sequence>MAAPPDLQDEPLSLGSPGSQWFGGRGDGEDEATAVMGARPAQQDGEPAWGSGAGAGVTSSRELCSGPARSPPVAMETASTGMAAVPDALDHSPSSTLKDGEGACYTSLISDVCYPPREDSAYFTGILQKENGHITTSESPEEPETPGPSLPEVPGMEPQGLLSSDSGIEMTPAESTEVNKILADPLDQMKAEAYKYIDITRPQEAKGQEEQHPGLEDKDLDFKDKDTEVSTKAEGVRAPNQPAPVEGKLIKDHLFEESTFAPYIDELSDEQHRVSLVTAPVKITLTEIEPPLMTATQETIPEKQDLCLKPSPDTVPTVTVSEPEDDSPGSVTPPSSGTEPSAAESQGKGSVSEDELIAAIKEAKGLSYETTESPRPVGQVADKPKTKTRSGLPTIPSPLDQEASSAESGDSEIELVSEDPMASEDALPSGYVSFGHVSGPPPSPASPSIQYSILREEREAELDSELIIESCDASSASEESPKREQDSPPMKPGALDAIREETGSRATEERAPSHQGPVEPDPMLSFAPAAALQSRPEPSSGDGASVPEPPRSQQQKPEEEAVSSSQSPTATEIPGPLGSGLMPPLPFFNKQKAIDLLYWRDIKQTGIVFGSFLLLLFSLTQFSVVSVVAYLALAALSATISFRIYKSVLQAVQKTDEGHPFKAYLELEITLSQEQIQKYTDCLQLYVNSTLKELRRLFLVQDLVDSLKFAVLMWLLTYVGALFNGLTLLLMAVVSMFTLPVVYVKHQAQVDQYLGLVRTHINTVVAKIQAKIPGAKRHAE</sequence>
<name>RTN1_MOUSE</name>
<accession>Q8K0T0</accession>
<accession>Q8K4S4</accession>
<gene>
    <name type="primary">Rtn1</name>
    <name type="synonym">Nsp</name>
</gene>
<organism>
    <name type="scientific">Mus musculus</name>
    <name type="common">Mouse</name>
    <dbReference type="NCBI Taxonomy" id="10090"/>
    <lineage>
        <taxon>Eukaryota</taxon>
        <taxon>Metazoa</taxon>
        <taxon>Chordata</taxon>
        <taxon>Craniata</taxon>
        <taxon>Vertebrata</taxon>
        <taxon>Euteleostomi</taxon>
        <taxon>Mammalia</taxon>
        <taxon>Eutheria</taxon>
        <taxon>Euarchontoglires</taxon>
        <taxon>Glires</taxon>
        <taxon>Rodentia</taxon>
        <taxon>Myomorpha</taxon>
        <taxon>Muroidea</taxon>
        <taxon>Muridae</taxon>
        <taxon>Murinae</taxon>
        <taxon>Mus</taxon>
        <taxon>Mus</taxon>
    </lineage>
</organism>
<evidence type="ECO:0000250" key="1">
    <source>
        <dbReference type="UniProtKB" id="Q16799"/>
    </source>
</evidence>
<evidence type="ECO:0000250" key="2">
    <source>
        <dbReference type="UniProtKB" id="Q64548"/>
    </source>
</evidence>
<evidence type="ECO:0000255" key="3"/>
<evidence type="ECO:0000255" key="4">
    <source>
        <dbReference type="PROSITE-ProRule" id="PRU00170"/>
    </source>
</evidence>
<evidence type="ECO:0000256" key="5">
    <source>
        <dbReference type="SAM" id="MobiDB-lite"/>
    </source>
</evidence>
<evidence type="ECO:0000269" key="6">
    <source>
    </source>
</evidence>
<evidence type="ECO:0000305" key="7"/>
<evidence type="ECO:0007744" key="8">
    <source>
    </source>
</evidence>